<comment type="function">
    <text evidence="1">Catalyzes the deformylation of 4-deoxy-4-formamido-L-arabinose-phosphoundecaprenol to 4-amino-4-deoxy-L-arabinose-phosphoundecaprenol. The modified arabinose is attached to lipid A and is required for resistance to polymyxin and cationic antimicrobial peptides.</text>
</comment>
<comment type="catalytic activity">
    <reaction evidence="1">
        <text>4-deoxy-4-formamido-alpha-L-arabinopyranosyl di-trans,octa-cis-undecaprenyl phosphate + H2O = 4-amino-4-deoxy-alpha-L-arabinopyranosyl di-trans,octa-cis-undecaprenyl phosphate + formate</text>
        <dbReference type="Rhea" id="RHEA:27734"/>
        <dbReference type="ChEBI" id="CHEBI:15377"/>
        <dbReference type="ChEBI" id="CHEBI:15740"/>
        <dbReference type="ChEBI" id="CHEBI:58909"/>
        <dbReference type="ChEBI" id="CHEBI:60463"/>
        <dbReference type="EC" id="3.5.1.n3"/>
    </reaction>
</comment>
<comment type="pathway">
    <text evidence="1">Glycolipid biosynthesis; 4-amino-4-deoxy-alpha-L-arabinose undecaprenyl phosphate biosynthesis; 4-amino-4-deoxy-alpha-L-arabinose undecaprenyl phosphate from UDP-4-deoxy-4-formamido-beta-L-arabinose and undecaprenyl phosphate: step 2/2.</text>
</comment>
<comment type="pathway">
    <text evidence="1">Bacterial outer membrane biogenesis; lipopolysaccharide biosynthesis.</text>
</comment>
<comment type="similarity">
    <text evidence="1">Belongs to the polysaccharide deacetylase family. ArnD deformylase subfamily.</text>
</comment>
<reference key="1">
    <citation type="journal article" date="2005" name="Proc. Natl. Acad. Sci. U.S.A.">
        <title>Comparison of the complete genome sequences of Pseudomonas syringae pv. syringae B728a and pv. tomato DC3000.</title>
        <authorList>
            <person name="Feil H."/>
            <person name="Feil W.S."/>
            <person name="Chain P."/>
            <person name="Larimer F."/>
            <person name="Dibartolo G."/>
            <person name="Copeland A."/>
            <person name="Lykidis A."/>
            <person name="Trong S."/>
            <person name="Nolan M."/>
            <person name="Goltsman E."/>
            <person name="Thiel J."/>
            <person name="Malfatti S."/>
            <person name="Loper J.E."/>
            <person name="Lapidus A."/>
            <person name="Detter J.C."/>
            <person name="Land M."/>
            <person name="Richardson P.M."/>
            <person name="Kyrpides N.C."/>
            <person name="Ivanova N."/>
            <person name="Lindow S.E."/>
        </authorList>
    </citation>
    <scope>NUCLEOTIDE SEQUENCE [LARGE SCALE GENOMIC DNA]</scope>
    <source>
        <strain>B728a</strain>
    </source>
</reference>
<sequence length="293" mass="32550">MQAGLRIDVDTYRGTREGVPRLLDILDEAQVKATFFFSVGPDNMGRHLWRLVRPTFFWKMLRSNAASLYGWDILLAGTAWPGKPIGRDLGPLMRRALDAGHEIGLHAWDHHGWQANAGHWSDRQLTAQIHRGVDCLSDILGHPVVCSAAAGWRADQRVVQAKEAFGFRYNSDCRGASLFRPLLADGSLGTAQIPVDLPTFDEVIGPHLKPDAFNDYILGRFAARQLNVYTLHAEVEGIIMADGFRQLLKRANTQGIHFAPLGHLLPDAIERLPSGHIVRGHLPGREGWLGVQQ</sequence>
<accession>Q4ZSZ1</accession>
<keyword id="KW-0046">Antibiotic resistance</keyword>
<keyword id="KW-0378">Hydrolase</keyword>
<keyword id="KW-0441">Lipid A biosynthesis</keyword>
<keyword id="KW-0444">Lipid biosynthesis</keyword>
<keyword id="KW-0443">Lipid metabolism</keyword>
<keyword id="KW-0448">Lipopolysaccharide biosynthesis</keyword>
<evidence type="ECO:0000255" key="1">
    <source>
        <dbReference type="HAMAP-Rule" id="MF_01870"/>
    </source>
</evidence>
<name>ARND_PSEU2</name>
<organism>
    <name type="scientific">Pseudomonas syringae pv. syringae (strain B728a)</name>
    <dbReference type="NCBI Taxonomy" id="205918"/>
    <lineage>
        <taxon>Bacteria</taxon>
        <taxon>Pseudomonadati</taxon>
        <taxon>Pseudomonadota</taxon>
        <taxon>Gammaproteobacteria</taxon>
        <taxon>Pseudomonadales</taxon>
        <taxon>Pseudomonadaceae</taxon>
        <taxon>Pseudomonas</taxon>
        <taxon>Pseudomonas syringae</taxon>
    </lineage>
</organism>
<feature type="chain" id="PRO_0000383526" description="Probable 4-deoxy-4-formamido-L-arabinose-phosphoundecaprenol deformylase ArnD">
    <location>
        <begin position="1"/>
        <end position="293"/>
    </location>
</feature>
<feature type="domain" description="NodB homology" evidence="1">
    <location>
        <begin position="1"/>
        <end position="259"/>
    </location>
</feature>
<gene>
    <name evidence="1" type="primary">arnD</name>
    <name type="ordered locus">Psyr_2692</name>
</gene>
<protein>
    <recommendedName>
        <fullName evidence="1">Probable 4-deoxy-4-formamido-L-arabinose-phosphoundecaprenol deformylase ArnD</fullName>
        <ecNumber evidence="1">3.5.1.n3</ecNumber>
    </recommendedName>
</protein>
<dbReference type="EC" id="3.5.1.n3" evidence="1"/>
<dbReference type="EMBL" id="CP000075">
    <property type="protein sequence ID" value="AAY37731.1"/>
    <property type="molecule type" value="Genomic_DNA"/>
</dbReference>
<dbReference type="RefSeq" id="WP_011267893.1">
    <property type="nucleotide sequence ID" value="NC_007005.1"/>
</dbReference>
<dbReference type="RefSeq" id="YP_235769.1">
    <property type="nucleotide sequence ID" value="NC_007005.1"/>
</dbReference>
<dbReference type="SMR" id="Q4ZSZ1"/>
<dbReference type="STRING" id="205918.Psyr_2692"/>
<dbReference type="KEGG" id="psb:Psyr_2692"/>
<dbReference type="PATRIC" id="fig|205918.7.peg.2752"/>
<dbReference type="eggNOG" id="COG0726">
    <property type="taxonomic scope" value="Bacteria"/>
</dbReference>
<dbReference type="HOGENOM" id="CLU_084199_0_0_6"/>
<dbReference type="OrthoDB" id="5589314at2"/>
<dbReference type="UniPathway" id="UPA00030"/>
<dbReference type="UniPathway" id="UPA00036">
    <property type="reaction ID" value="UER00496"/>
</dbReference>
<dbReference type="Proteomes" id="UP000000426">
    <property type="component" value="Chromosome"/>
</dbReference>
<dbReference type="GO" id="GO:0016020">
    <property type="term" value="C:membrane"/>
    <property type="evidence" value="ECO:0007669"/>
    <property type="project" value="GOC"/>
</dbReference>
<dbReference type="GO" id="GO:0016811">
    <property type="term" value="F:hydrolase activity, acting on carbon-nitrogen (but not peptide) bonds, in linear amides"/>
    <property type="evidence" value="ECO:0007669"/>
    <property type="project" value="UniProtKB-UniRule"/>
</dbReference>
<dbReference type="GO" id="GO:0036108">
    <property type="term" value="P:4-amino-4-deoxy-alpha-L-arabinopyranosyl undecaprenyl phosphate biosynthetic process"/>
    <property type="evidence" value="ECO:0007669"/>
    <property type="project" value="UniProtKB-UniRule"/>
</dbReference>
<dbReference type="GO" id="GO:0009245">
    <property type="term" value="P:lipid A biosynthetic process"/>
    <property type="evidence" value="ECO:0007669"/>
    <property type="project" value="UniProtKB-UniRule"/>
</dbReference>
<dbReference type="GO" id="GO:0009103">
    <property type="term" value="P:lipopolysaccharide biosynthetic process"/>
    <property type="evidence" value="ECO:0007669"/>
    <property type="project" value="UniProtKB-UniRule"/>
</dbReference>
<dbReference type="GO" id="GO:0046677">
    <property type="term" value="P:response to antibiotic"/>
    <property type="evidence" value="ECO:0007669"/>
    <property type="project" value="UniProtKB-KW"/>
</dbReference>
<dbReference type="CDD" id="cd10939">
    <property type="entry name" value="CE4_ArnD"/>
    <property type="match status" value="1"/>
</dbReference>
<dbReference type="Gene3D" id="3.20.20.370">
    <property type="entry name" value="Glycoside hydrolase/deacetylase"/>
    <property type="match status" value="1"/>
</dbReference>
<dbReference type="HAMAP" id="MF_01870">
    <property type="entry name" value="ArnD"/>
    <property type="match status" value="1"/>
</dbReference>
<dbReference type="InterPro" id="IPR023557">
    <property type="entry name" value="ArnD"/>
</dbReference>
<dbReference type="InterPro" id="IPR011330">
    <property type="entry name" value="Glyco_hydro/deAcase_b/a-brl"/>
</dbReference>
<dbReference type="InterPro" id="IPR002509">
    <property type="entry name" value="NODB_dom"/>
</dbReference>
<dbReference type="InterPro" id="IPR050248">
    <property type="entry name" value="Polysacc_deacetylase_ArnD"/>
</dbReference>
<dbReference type="NCBIfam" id="NF011923">
    <property type="entry name" value="PRK15394.1"/>
    <property type="match status" value="1"/>
</dbReference>
<dbReference type="PANTHER" id="PTHR10587:SF137">
    <property type="entry name" value="4-DEOXY-4-FORMAMIDO-L-ARABINOSE-PHOSPHOUNDECAPRENOL DEFORMYLASE ARND-RELATED"/>
    <property type="match status" value="1"/>
</dbReference>
<dbReference type="PANTHER" id="PTHR10587">
    <property type="entry name" value="GLYCOSYL TRANSFERASE-RELATED"/>
    <property type="match status" value="1"/>
</dbReference>
<dbReference type="Pfam" id="PF01522">
    <property type="entry name" value="Polysacc_deac_1"/>
    <property type="match status" value="1"/>
</dbReference>
<dbReference type="SUPFAM" id="SSF88713">
    <property type="entry name" value="Glycoside hydrolase/deacetylase"/>
    <property type="match status" value="1"/>
</dbReference>
<dbReference type="PROSITE" id="PS51677">
    <property type="entry name" value="NODB"/>
    <property type="match status" value="1"/>
</dbReference>
<proteinExistence type="inferred from homology"/>